<proteinExistence type="evidence at transcript level"/>
<feature type="initiator methionine" description="Removed" evidence="1">
    <location>
        <position position="1"/>
    </location>
</feature>
<feature type="chain" id="PRO_0000460291" description="Leghemoglobin 2">
    <location>
        <begin position="2"/>
        <end position="146"/>
    </location>
</feature>
<feature type="domain" description="Globin" evidence="6">
    <location>
        <begin position="2"/>
        <end position="146"/>
    </location>
</feature>
<feature type="binding site" evidence="3">
    <location>
        <position position="45"/>
    </location>
    <ligand>
        <name>heme b</name>
        <dbReference type="ChEBI" id="CHEBI:60344"/>
    </ligand>
</feature>
<feature type="binding site" evidence="3">
    <location>
        <position position="61"/>
    </location>
    <ligand>
        <name>O2</name>
        <dbReference type="ChEBI" id="CHEBI:15379"/>
    </ligand>
</feature>
<feature type="binding site" evidence="3">
    <location>
        <position position="64"/>
    </location>
    <ligand>
        <name>heme b</name>
        <dbReference type="ChEBI" id="CHEBI:60344"/>
    </ligand>
</feature>
<feature type="binding site" description="proximal binding residue" evidence="6">
    <location>
        <position position="93"/>
    </location>
    <ligand>
        <name>heme b</name>
        <dbReference type="ChEBI" id="CHEBI:60344"/>
    </ligand>
    <ligandPart>
        <name>Fe</name>
        <dbReference type="ChEBI" id="CHEBI:18248"/>
    </ligandPart>
</feature>
<feature type="binding site" evidence="3">
    <location>
        <position position="96"/>
    </location>
    <ligand>
        <name>heme b</name>
        <dbReference type="ChEBI" id="CHEBI:60344"/>
    </ligand>
</feature>
<feature type="modified residue" description="Nitrated tyrosine" evidence="2">
    <location>
        <position position="30"/>
    </location>
</feature>
<feature type="modified residue" description="Phosphoserine" evidence="4">
    <location>
        <position position="45"/>
    </location>
</feature>
<feature type="modified residue" description="Nitrated tyrosine" evidence="2">
    <location>
        <position position="134"/>
    </location>
</feature>
<protein>
    <recommendedName>
        <fullName evidence="12">Leghemoglobin 2</fullName>
        <shortName evidence="12 13">LjLb2</shortName>
    </recommendedName>
</protein>
<keyword id="KW-0963">Cytoplasm</keyword>
<keyword id="KW-0349">Heme</keyword>
<keyword id="KW-0408">Iron</keyword>
<keyword id="KW-0479">Metal-binding</keyword>
<keyword id="KW-0944">Nitration</keyword>
<keyword id="KW-0535">Nitrogen fixation</keyword>
<keyword id="KW-0536">Nodulation</keyword>
<keyword id="KW-0539">Nucleus</keyword>
<keyword id="KW-0561">Oxygen transport</keyword>
<keyword id="KW-0597">Phosphoprotein</keyword>
<keyword id="KW-0813">Transport</keyword>
<reference key="1">
    <citation type="journal article" date="2002" name="Plant Cell Physiol.">
        <title>Expression of symbiotic and nonsymbiotic globin genes responding to microsymbionts on Lotus japonicus.</title>
        <authorList>
            <person name="Uchiumi T."/>
            <person name="Shimoda Y."/>
            <person name="Tsuruta T."/>
            <person name="Mukoyoshi Y."/>
            <person name="Suzuki A."/>
            <person name="Senoo K."/>
            <person name="Sato S."/>
            <person name="Kato T."/>
            <person name="Tabata S."/>
            <person name="Higashi S."/>
            <person name="Abe M."/>
        </authorList>
    </citation>
    <scope>NUCLEOTIDE SEQUENCE [MRNA]</scope>
    <scope>TISSUE SPECIFICITY</scope>
    <source>
        <strain>cv. MG-20</strain>
        <tissue>Root nodule</tissue>
    </source>
</reference>
<reference key="2">
    <citation type="submission" date="2005-10" db="EMBL/GenBank/DDBJ databases">
        <authorList>
            <person name="Shimoda Y."/>
            <person name="Uchiumi T."/>
            <person name="Suzuki A."/>
            <person name="Keishi S."/>
            <person name="Sato S."/>
            <person name="Kato T."/>
            <person name="Tabata S."/>
            <person name="Higashi S."/>
            <person name="Abe M."/>
        </authorList>
    </citation>
    <scope>NUCLEOTIDE SEQUENCE [MRNA]</scope>
    <source>
        <tissue>Root nodule</tissue>
    </source>
</reference>
<reference key="3">
    <citation type="submission" date="2000-05" db="EMBL/GenBank/DDBJ databases">
        <title>Genomic leghemoglobin genes of Lotus japonicus.</title>
        <authorList>
            <person name="Uchiumi T."/>
            <person name="Tsuruta T."/>
            <person name="Suzuki A."/>
            <person name="Abe M."/>
            <person name="Higashi S."/>
        </authorList>
    </citation>
    <scope>NUCLEOTIDE SEQUENCE [GENOMIC DNA] OF 24-146</scope>
    <source>
        <strain>cv. Gifu</strain>
    </source>
</reference>
<reference key="4">
    <citation type="journal article" date="2005" name="Curr. Biol.">
        <title>Symbiotic leghemoglobins are crucial for nitrogen fixation in legume root nodules but not for general plant growth and development.</title>
        <authorList>
            <person name="Ott T."/>
            <person name="van Dongen J.T."/>
            <person name="Guenther C."/>
            <person name="Krusell L."/>
            <person name="Desbrosses G."/>
            <person name="Vigeolas H."/>
            <person name="Bock V."/>
            <person name="Czechowski T."/>
            <person name="Geigenberger P."/>
            <person name="Udvardi M.K."/>
        </authorList>
    </citation>
    <scope>FUNCTION</scope>
    <scope>DISRUPTION PHENOTYPE</scope>
    <source>
        <strain>cv. Gifu</strain>
    </source>
</reference>
<reference key="5">
    <citation type="journal article" date="2007" name="Mol. Plant Microbe Interact.">
        <title>Metabolism of reactive oxygen species is attenuated in leghemoglobin-deficient nodules of Lotus japonicus.</title>
        <authorList>
            <person name="Guenther C."/>
            <person name="Schlereth A."/>
            <person name="Udvardi M."/>
            <person name="Ott T."/>
        </authorList>
    </citation>
    <scope>FUNCTION</scope>
    <scope>DISRUPTION PHENOTYPE</scope>
    <source>
        <strain>cv. Gifu</strain>
    </source>
</reference>
<reference key="6">
    <citation type="journal article" date="2009" name="Mol. Plant Microbe Interact.">
        <title>Absence of symbiotic leghemoglobins alters bacteroid and plant cell differentiation during development of Lotus japonicus root nodules.</title>
        <authorList>
            <person name="Ott T."/>
            <person name="Sullivan J."/>
            <person name="James E.K."/>
            <person name="Flemetakis E."/>
            <person name="Guenther C."/>
            <person name="Gibon Y."/>
            <person name="Ronson C."/>
            <person name="Udvardi M."/>
        </authorList>
    </citation>
    <scope>FUNCTION</scope>
    <scope>DISRUPTION PHENOTYPE</scope>
    <source>
        <strain>cv. Gifu</strain>
    </source>
</reference>
<reference key="7">
    <citation type="journal article" date="2019" name="New Phytol.">
        <title>CRISPR/Cas9 knockout of leghemoglobin genes in Lotus japonicus uncovers their synergistic roles in symbiotic nitrogen fixation.</title>
        <authorList>
            <person name="Wang L."/>
            <person name="Rubio M.C."/>
            <person name="Xin X."/>
            <person name="Zhang B."/>
            <person name="Fan Q."/>
            <person name="Wang Q."/>
            <person name="Ning G."/>
            <person name="Becana M."/>
            <person name="Duanmu D."/>
        </authorList>
    </citation>
    <scope>FUNCTION</scope>
    <scope>DISRUPTION PHENOTYPE</scope>
    <scope>TISSUE SPECIFICITY</scope>
    <scope>INDUCTION BY MESORHIZOBIUM LOTI</scope>
    <scope>DEVELOPMENTAL STAGE</scope>
    <source>
        <strain>cv. MG-20</strain>
    </source>
</reference>
<reference key="8">
    <citation type="journal article" date="2020" name="New Phytol.">
        <title>Hemoglobins in the legume-Rhizobium symbiosis.</title>
        <authorList>
            <person name="Larrainzar E."/>
            <person name="Villar I."/>
            <person name="Rubio M.C."/>
            <person name="Perez-Rontome C."/>
            <person name="Huertas R."/>
            <person name="Sato S."/>
            <person name="Mun J.-H."/>
            <person name="Becana M."/>
        </authorList>
    </citation>
    <scope>REVIEW ON PHYTOGLOBINS</scope>
    <scope>GENE FAMILY</scope>
    <scope>NOMENCLATURE</scope>
</reference>
<gene>
    <name evidence="12 13" type="primary">LB2</name>
    <name evidence="14" type="synonym">MLJLB</name>
    <name evidence="16" type="ORF">Lj5g3v0035290</name>
    <name evidence="16" type="ORF">LotjaGi5g1v0024900</name>
</gene>
<accession>Q3C1F6</accession>
<accession>Q9FXP8</accession>
<evidence type="ECO:0000250" key="1">
    <source>
        <dbReference type="UniProtKB" id="P02233"/>
    </source>
</evidence>
<evidence type="ECO:0000250" key="2">
    <source>
        <dbReference type="UniProtKB" id="P02234"/>
    </source>
</evidence>
<evidence type="ECO:0000250" key="3">
    <source>
        <dbReference type="UniProtKB" id="P02240"/>
    </source>
</evidence>
<evidence type="ECO:0000250" key="4">
    <source>
        <dbReference type="UniProtKB" id="Q3C1F7"/>
    </source>
</evidence>
<evidence type="ECO:0000250" key="5">
    <source>
        <dbReference type="UniProtKB" id="Q43296"/>
    </source>
</evidence>
<evidence type="ECO:0000255" key="6">
    <source>
        <dbReference type="PROSITE-ProRule" id="PRU00238"/>
    </source>
</evidence>
<evidence type="ECO:0000269" key="7">
    <source>
    </source>
</evidence>
<evidence type="ECO:0000269" key="8">
    <source>
    </source>
</evidence>
<evidence type="ECO:0000269" key="9">
    <source>
    </source>
</evidence>
<evidence type="ECO:0000269" key="10">
    <source>
    </source>
</evidence>
<evidence type="ECO:0000269" key="11">
    <source>
    </source>
</evidence>
<evidence type="ECO:0000303" key="12">
    <source>
    </source>
</evidence>
<evidence type="ECO:0000303" key="13">
    <source>
    </source>
</evidence>
<evidence type="ECO:0000303" key="14">
    <source ref="3"/>
</evidence>
<evidence type="ECO:0000305" key="15"/>
<evidence type="ECO:0000305" key="16">
    <source>
    </source>
</evidence>
<name>LGB2_LOTJA</name>
<sequence length="146" mass="15391">MGFTAQQDALVGSSYEAFKQNLPSNSVLFYTLILEKAPAAKDMFSFLKASGPTHSPQLQAHAEKVFGLTRDAAAQLLAKGEVTLADASLGAVHVQKAVADPHFAVVKEALLKTVQAAVGDKWSEELSTAWGVAYDGLAAAIKKAMS</sequence>
<organism>
    <name type="scientific">Lotus japonicus</name>
    <name type="common">Lotus corniculatus var. japonicus</name>
    <dbReference type="NCBI Taxonomy" id="34305"/>
    <lineage>
        <taxon>Eukaryota</taxon>
        <taxon>Viridiplantae</taxon>
        <taxon>Streptophyta</taxon>
        <taxon>Embryophyta</taxon>
        <taxon>Tracheophyta</taxon>
        <taxon>Spermatophyta</taxon>
        <taxon>Magnoliopsida</taxon>
        <taxon>eudicotyledons</taxon>
        <taxon>Gunneridae</taxon>
        <taxon>Pentapetalae</taxon>
        <taxon>rosids</taxon>
        <taxon>fabids</taxon>
        <taxon>Fabales</taxon>
        <taxon>Fabaceae</taxon>
        <taxon>Papilionoideae</taxon>
        <taxon>50 kb inversion clade</taxon>
        <taxon>NPAAA clade</taxon>
        <taxon>Hologalegina</taxon>
        <taxon>robinioid clade</taxon>
        <taxon>Loteae</taxon>
        <taxon>Lotus</taxon>
    </lineage>
</organism>
<comment type="function">
    <text evidence="5 8 9 10 11">Leghemoglobin that reversibly binds oxygen O(2) through a pentacoordinated heme iron (By similarity). In root nodules, facilitates the diffusion of oxygen to the bacteroids while preventing the bacterial nitrogenase from being inactivated by buffering dioxygen, nitric oxide and carbon monoxide, and promoting the formation of reactive oxygen species (ROS, e.g. H(2)O(2)) (PubMed:15797021, PubMed:17990967, PubMed:19522562, PubMed:31355948). This role is essential for symbiotic nitrogen fixation (SNF) (PubMed:15797021, PubMed:17990967, PubMed:19522562, PubMed:31355948).</text>
</comment>
<comment type="subunit">
    <text evidence="3">Monomer.</text>
</comment>
<comment type="subcellular location">
    <subcellularLocation>
        <location evidence="3">Cytoplasm</location>
        <location evidence="3">Cytosol</location>
    </subcellularLocation>
    <subcellularLocation>
        <location evidence="3">Nucleus</location>
    </subcellularLocation>
</comment>
<comment type="tissue specificity">
    <text evidence="7 11">Specifically and strongly expressed in root nodules and at low levels in seedlings.</text>
</comment>
<comment type="developmental stage">
    <text evidence="11">In nodulating roots, first observed in nodule primordia, accumulates during nodule maturation, and fades out progressively in aging and senescent nodules.</text>
</comment>
<comment type="induction">
    <text evidence="11">Accumulates in developing root nodules upon inoculation with the symbiotic M.loti strain MAFF303099.</text>
</comment>
<comment type="PTM">
    <text evidence="2">Nitrated in effective nodules and particularly in hypoxic conditions; this mechanism may play a protective role in the symbiosis by buffering toxic peroxynitrite NO(2)(-). Nitration level decrease during nodule senescence.</text>
</comment>
<comment type="PTM">
    <text evidence="4">Phosphorylation at Ser-45 disrupts the molecular environment of its porphyrin ring oxygen binding pocket, thus leading to a reduced oxygen consumption and to the delivery of oxygen O(2) to symbiosomes.</text>
</comment>
<comment type="disruption phenotype">
    <text evidence="8 9 11">Normal growth and flowering under non-restrictive nutrient conditions, but classic symptoms of extreme nitrogen limitation under restrictive nutrient conditions, including severely stunted growth, increased root/shoot ratio and delayed flowering (PubMed:15797021). Following inoculation with symbiotic rhizobia, accumulation of free oxygen at the expense of reactive oxygen species (ROS, e.g. H(2)O(2)) production in root nodules leading to the loss of bacterial nitrogenase protein and the absence of symbiotic nitrogen fixation (SNF), as well as decreased ATP/ADP ratio; bacteroids of these impaired nodules exhibit altered ultrastructure due to disturbed bacterial differentiation (PubMed:15797021, PubMed:17990967). In symbiotic conditions, plants lacking leghemoglobins lb23 and lb123 have reduced growth and exhibit lower N(2) fixation in root nodules displaying ultrastructural alterations including abnormal mitochondria and large lytic vacuoles, associated with increased reactive oxygen species (ROS) accumulation as well as early nodules senescence (PubMed:31355948).</text>
</comment>
<comment type="similarity">
    <text evidence="15">Belongs to the plant globin family.</text>
</comment>
<dbReference type="EMBL" id="BT143089">
    <property type="protein sequence ID" value="AFK42883.1"/>
    <property type="molecule type" value="mRNA"/>
</dbReference>
<dbReference type="EMBL" id="AB238218">
    <property type="protein sequence ID" value="BAE46737.1"/>
    <property type="molecule type" value="mRNA"/>
</dbReference>
<dbReference type="EMBL" id="AB042717">
    <property type="protein sequence ID" value="BAB18107.1"/>
    <property type="molecule type" value="Genomic_DNA"/>
</dbReference>
<dbReference type="SMR" id="Q3C1F6"/>
<dbReference type="OrthoDB" id="2012505at2759"/>
<dbReference type="GO" id="GO:0005829">
    <property type="term" value="C:cytosol"/>
    <property type="evidence" value="ECO:0007669"/>
    <property type="project" value="UniProtKB-SubCell"/>
</dbReference>
<dbReference type="GO" id="GO:0043663">
    <property type="term" value="C:host bacteroid-containing symbiosome"/>
    <property type="evidence" value="ECO:0000314"/>
    <property type="project" value="UniProtKB"/>
</dbReference>
<dbReference type="GO" id="GO:0005634">
    <property type="term" value="C:nucleus"/>
    <property type="evidence" value="ECO:0007669"/>
    <property type="project" value="UniProtKB-SubCell"/>
</dbReference>
<dbReference type="GO" id="GO:0020037">
    <property type="term" value="F:heme binding"/>
    <property type="evidence" value="ECO:0007669"/>
    <property type="project" value="InterPro"/>
</dbReference>
<dbReference type="GO" id="GO:0046872">
    <property type="term" value="F:metal ion binding"/>
    <property type="evidence" value="ECO:0007669"/>
    <property type="project" value="UniProtKB-KW"/>
</dbReference>
<dbReference type="GO" id="GO:0019825">
    <property type="term" value="F:oxygen binding"/>
    <property type="evidence" value="ECO:0007669"/>
    <property type="project" value="InterPro"/>
</dbReference>
<dbReference type="GO" id="GO:0005344">
    <property type="term" value="F:oxygen carrier activity"/>
    <property type="evidence" value="ECO:0007669"/>
    <property type="project" value="UniProtKB-KW"/>
</dbReference>
<dbReference type="GO" id="GO:0032364">
    <property type="term" value="P:intracellular oxygen homeostasis"/>
    <property type="evidence" value="ECO:0000315"/>
    <property type="project" value="UniProtKB"/>
</dbReference>
<dbReference type="GO" id="GO:0009877">
    <property type="term" value="P:nodulation"/>
    <property type="evidence" value="ECO:0000315"/>
    <property type="project" value="UniProtKB"/>
</dbReference>
<dbReference type="GO" id="GO:0009609">
    <property type="term" value="P:response to symbiotic bacterium"/>
    <property type="evidence" value="ECO:0000315"/>
    <property type="project" value="UniProtKB"/>
</dbReference>
<dbReference type="Gene3D" id="1.10.490.10">
    <property type="entry name" value="Globins"/>
    <property type="match status" value="1"/>
</dbReference>
<dbReference type="InterPro" id="IPR000971">
    <property type="entry name" value="Globin"/>
</dbReference>
<dbReference type="InterPro" id="IPR009050">
    <property type="entry name" value="Globin-like_sf"/>
</dbReference>
<dbReference type="InterPro" id="IPR012292">
    <property type="entry name" value="Globin/Proto"/>
</dbReference>
<dbReference type="InterPro" id="IPR001032">
    <property type="entry name" value="Leghaemoglobin-like"/>
</dbReference>
<dbReference type="InterPro" id="IPR019824">
    <property type="entry name" value="Leghaemoglobin_Fe_BS"/>
</dbReference>
<dbReference type="PANTHER" id="PTHR22924">
    <property type="entry name" value="LEGHEMOGLOBIN-RELATED"/>
    <property type="match status" value="1"/>
</dbReference>
<dbReference type="PANTHER" id="PTHR22924:SF92">
    <property type="entry name" value="NON-SYMBIOTIC HEMOGLOBIN 2"/>
    <property type="match status" value="1"/>
</dbReference>
<dbReference type="Pfam" id="PF00042">
    <property type="entry name" value="Globin"/>
    <property type="match status" value="1"/>
</dbReference>
<dbReference type="PRINTS" id="PR00188">
    <property type="entry name" value="PLANTGLOBIN"/>
</dbReference>
<dbReference type="SUPFAM" id="SSF46458">
    <property type="entry name" value="Globin-like"/>
    <property type="match status" value="1"/>
</dbReference>
<dbReference type="PROSITE" id="PS01033">
    <property type="entry name" value="GLOBIN"/>
    <property type="match status" value="1"/>
</dbReference>
<dbReference type="PROSITE" id="PS00208">
    <property type="entry name" value="PLANT_GLOBIN"/>
    <property type="match status" value="1"/>
</dbReference>